<feature type="chain" id="PRO_0000381499" description="Biotin synthase">
    <location>
        <begin position="1"/>
        <end position="325"/>
    </location>
</feature>
<feature type="domain" description="Radical SAM core" evidence="2">
    <location>
        <begin position="36"/>
        <end position="254"/>
    </location>
</feature>
<feature type="binding site" evidence="1">
    <location>
        <position position="51"/>
    </location>
    <ligand>
        <name>[4Fe-4S] cluster</name>
        <dbReference type="ChEBI" id="CHEBI:49883"/>
        <note>4Fe-4S-S-AdoMet</note>
    </ligand>
</feature>
<feature type="binding site" evidence="1">
    <location>
        <position position="55"/>
    </location>
    <ligand>
        <name>[4Fe-4S] cluster</name>
        <dbReference type="ChEBI" id="CHEBI:49883"/>
        <note>4Fe-4S-S-AdoMet</note>
    </ligand>
</feature>
<feature type="binding site" evidence="1">
    <location>
        <position position="58"/>
    </location>
    <ligand>
        <name>[4Fe-4S] cluster</name>
        <dbReference type="ChEBI" id="CHEBI:49883"/>
        <note>4Fe-4S-S-AdoMet</note>
    </ligand>
</feature>
<feature type="binding site" evidence="1">
    <location>
        <position position="95"/>
    </location>
    <ligand>
        <name>[2Fe-2S] cluster</name>
        <dbReference type="ChEBI" id="CHEBI:190135"/>
    </ligand>
</feature>
<feature type="binding site" evidence="1">
    <location>
        <position position="126"/>
    </location>
    <ligand>
        <name>[2Fe-2S] cluster</name>
        <dbReference type="ChEBI" id="CHEBI:190135"/>
    </ligand>
</feature>
<feature type="binding site" evidence="1">
    <location>
        <position position="186"/>
    </location>
    <ligand>
        <name>[2Fe-2S] cluster</name>
        <dbReference type="ChEBI" id="CHEBI:190135"/>
    </ligand>
</feature>
<feature type="binding site" evidence="1">
    <location>
        <position position="258"/>
    </location>
    <ligand>
        <name>[2Fe-2S] cluster</name>
        <dbReference type="ChEBI" id="CHEBI:190135"/>
    </ligand>
</feature>
<protein>
    <recommendedName>
        <fullName evidence="1">Biotin synthase</fullName>
        <ecNumber evidence="1">2.8.1.6</ecNumber>
    </recommendedName>
</protein>
<dbReference type="EC" id="2.8.1.6" evidence="1"/>
<dbReference type="EMBL" id="CP000237">
    <property type="protein sequence ID" value="ABD45829.1"/>
    <property type="status" value="ALT_INIT"/>
    <property type="molecule type" value="Genomic_DNA"/>
</dbReference>
<dbReference type="RefSeq" id="WP_041917574.1">
    <property type="nucleotide sequence ID" value="NC_007798.1"/>
</dbReference>
<dbReference type="SMR" id="Q2GDF4"/>
<dbReference type="STRING" id="222891.NSE_0612"/>
<dbReference type="KEGG" id="nse:NSE_0612"/>
<dbReference type="eggNOG" id="COG0502">
    <property type="taxonomic scope" value="Bacteria"/>
</dbReference>
<dbReference type="HOGENOM" id="CLU_033172_1_2_5"/>
<dbReference type="OrthoDB" id="9786826at2"/>
<dbReference type="UniPathway" id="UPA00078">
    <property type="reaction ID" value="UER00162"/>
</dbReference>
<dbReference type="Proteomes" id="UP000001942">
    <property type="component" value="Chromosome"/>
</dbReference>
<dbReference type="GO" id="GO:0051537">
    <property type="term" value="F:2 iron, 2 sulfur cluster binding"/>
    <property type="evidence" value="ECO:0007669"/>
    <property type="project" value="UniProtKB-KW"/>
</dbReference>
<dbReference type="GO" id="GO:0051539">
    <property type="term" value="F:4 iron, 4 sulfur cluster binding"/>
    <property type="evidence" value="ECO:0007669"/>
    <property type="project" value="UniProtKB-KW"/>
</dbReference>
<dbReference type="GO" id="GO:0004076">
    <property type="term" value="F:biotin synthase activity"/>
    <property type="evidence" value="ECO:0007669"/>
    <property type="project" value="UniProtKB-UniRule"/>
</dbReference>
<dbReference type="GO" id="GO:0005506">
    <property type="term" value="F:iron ion binding"/>
    <property type="evidence" value="ECO:0007669"/>
    <property type="project" value="UniProtKB-UniRule"/>
</dbReference>
<dbReference type="GO" id="GO:0009102">
    <property type="term" value="P:biotin biosynthetic process"/>
    <property type="evidence" value="ECO:0007669"/>
    <property type="project" value="UniProtKB-UniRule"/>
</dbReference>
<dbReference type="CDD" id="cd01335">
    <property type="entry name" value="Radical_SAM"/>
    <property type="match status" value="1"/>
</dbReference>
<dbReference type="Gene3D" id="3.20.20.70">
    <property type="entry name" value="Aldolase class I"/>
    <property type="match status" value="1"/>
</dbReference>
<dbReference type="HAMAP" id="MF_01694">
    <property type="entry name" value="BioB"/>
    <property type="match status" value="1"/>
</dbReference>
<dbReference type="InterPro" id="IPR013785">
    <property type="entry name" value="Aldolase_TIM"/>
</dbReference>
<dbReference type="InterPro" id="IPR010722">
    <property type="entry name" value="BATS_dom"/>
</dbReference>
<dbReference type="InterPro" id="IPR002684">
    <property type="entry name" value="Biotin_synth/BioAB"/>
</dbReference>
<dbReference type="InterPro" id="IPR024177">
    <property type="entry name" value="Biotin_synthase"/>
</dbReference>
<dbReference type="InterPro" id="IPR006638">
    <property type="entry name" value="Elp3/MiaA/NifB-like_rSAM"/>
</dbReference>
<dbReference type="InterPro" id="IPR007197">
    <property type="entry name" value="rSAM"/>
</dbReference>
<dbReference type="NCBIfam" id="TIGR00433">
    <property type="entry name" value="bioB"/>
    <property type="match status" value="1"/>
</dbReference>
<dbReference type="PANTHER" id="PTHR22976">
    <property type="entry name" value="BIOTIN SYNTHASE"/>
    <property type="match status" value="1"/>
</dbReference>
<dbReference type="PANTHER" id="PTHR22976:SF2">
    <property type="entry name" value="BIOTIN SYNTHASE, MITOCHONDRIAL"/>
    <property type="match status" value="1"/>
</dbReference>
<dbReference type="Pfam" id="PF06968">
    <property type="entry name" value="BATS"/>
    <property type="match status" value="1"/>
</dbReference>
<dbReference type="Pfam" id="PF04055">
    <property type="entry name" value="Radical_SAM"/>
    <property type="match status" value="1"/>
</dbReference>
<dbReference type="PIRSF" id="PIRSF001619">
    <property type="entry name" value="Biotin_synth"/>
    <property type="match status" value="1"/>
</dbReference>
<dbReference type="SFLD" id="SFLDF00272">
    <property type="entry name" value="biotin_synthase"/>
    <property type="match status" value="1"/>
</dbReference>
<dbReference type="SFLD" id="SFLDG01278">
    <property type="entry name" value="biotin_synthase_like"/>
    <property type="match status" value="1"/>
</dbReference>
<dbReference type="SMART" id="SM00876">
    <property type="entry name" value="BATS"/>
    <property type="match status" value="1"/>
</dbReference>
<dbReference type="SMART" id="SM00729">
    <property type="entry name" value="Elp3"/>
    <property type="match status" value="1"/>
</dbReference>
<dbReference type="SUPFAM" id="SSF102114">
    <property type="entry name" value="Radical SAM enzymes"/>
    <property type="match status" value="1"/>
</dbReference>
<dbReference type="PROSITE" id="PS51918">
    <property type="entry name" value="RADICAL_SAM"/>
    <property type="match status" value="1"/>
</dbReference>
<sequence length="325" mass="36011">MAKVWQFSEAEELFHLPFLDLLYSAQHVHRENFPHNEVQLAMLLSVKTGGCPENCSYCPQSAHYDTGLRKEPVMHVEKVLEAAKRAVELGATRFCIGAAWRGPRGKDLDIVCEMISRIKKLGLETCASLGLLSYEQAVSLKAAGLDFYNHNIDTSQEYYSKIITTRRFSDRIETLENVAKAGLKICSGGILGMGESNEDRIKMLVELSHLSFPPESIPINKLIPIPGTPLAEKNAVDPLDFVRIIALARIMFPKSYVRLSAGRESMSDELQTLCFIAGANSIFYGEKLLTSANSDPESDEKLLLKLGLLREKSKTAVDCSINLGS</sequence>
<keyword id="KW-0001">2Fe-2S</keyword>
<keyword id="KW-0004">4Fe-4S</keyword>
<keyword id="KW-0093">Biotin biosynthesis</keyword>
<keyword id="KW-0408">Iron</keyword>
<keyword id="KW-0411">Iron-sulfur</keyword>
<keyword id="KW-0479">Metal-binding</keyword>
<keyword id="KW-0949">S-adenosyl-L-methionine</keyword>
<keyword id="KW-0808">Transferase</keyword>
<proteinExistence type="inferred from homology"/>
<name>BIOB_NEOSM</name>
<evidence type="ECO:0000255" key="1">
    <source>
        <dbReference type="HAMAP-Rule" id="MF_01694"/>
    </source>
</evidence>
<evidence type="ECO:0000255" key="2">
    <source>
        <dbReference type="PROSITE-ProRule" id="PRU01266"/>
    </source>
</evidence>
<evidence type="ECO:0000305" key="3"/>
<comment type="function">
    <text evidence="1">Catalyzes the conversion of dethiobiotin (DTB) to biotin by the insertion of a sulfur atom into dethiobiotin via a radical-based mechanism.</text>
</comment>
<comment type="catalytic activity">
    <reaction evidence="1">
        <text>(4R,5S)-dethiobiotin + (sulfur carrier)-SH + 2 reduced [2Fe-2S]-[ferredoxin] + 2 S-adenosyl-L-methionine = (sulfur carrier)-H + biotin + 2 5'-deoxyadenosine + 2 L-methionine + 2 oxidized [2Fe-2S]-[ferredoxin]</text>
        <dbReference type="Rhea" id="RHEA:22060"/>
        <dbReference type="Rhea" id="RHEA-COMP:10000"/>
        <dbReference type="Rhea" id="RHEA-COMP:10001"/>
        <dbReference type="Rhea" id="RHEA-COMP:14737"/>
        <dbReference type="Rhea" id="RHEA-COMP:14739"/>
        <dbReference type="ChEBI" id="CHEBI:17319"/>
        <dbReference type="ChEBI" id="CHEBI:29917"/>
        <dbReference type="ChEBI" id="CHEBI:33737"/>
        <dbReference type="ChEBI" id="CHEBI:33738"/>
        <dbReference type="ChEBI" id="CHEBI:57586"/>
        <dbReference type="ChEBI" id="CHEBI:57844"/>
        <dbReference type="ChEBI" id="CHEBI:59789"/>
        <dbReference type="ChEBI" id="CHEBI:64428"/>
        <dbReference type="ChEBI" id="CHEBI:149473"/>
        <dbReference type="EC" id="2.8.1.6"/>
    </reaction>
</comment>
<comment type="cofactor">
    <cofactor evidence="1">
        <name>[4Fe-4S] cluster</name>
        <dbReference type="ChEBI" id="CHEBI:49883"/>
    </cofactor>
    <text evidence="1">Binds 1 [4Fe-4S] cluster. The cluster is coordinated with 3 cysteines and an exchangeable S-adenosyl-L-methionine.</text>
</comment>
<comment type="cofactor">
    <cofactor evidence="1">
        <name>[2Fe-2S] cluster</name>
        <dbReference type="ChEBI" id="CHEBI:190135"/>
    </cofactor>
    <text evidence="1">Binds 1 [2Fe-2S] cluster. The cluster is coordinated with 3 cysteines and 1 arginine.</text>
</comment>
<comment type="pathway">
    <text evidence="1">Cofactor biosynthesis; biotin biosynthesis; biotin from 7,8-diaminononanoate: step 2/2.</text>
</comment>
<comment type="subunit">
    <text evidence="1">Homodimer.</text>
</comment>
<comment type="similarity">
    <text evidence="1">Belongs to the radical SAM superfamily. Biotin synthase family.</text>
</comment>
<comment type="sequence caution" evidence="3">
    <conflict type="erroneous initiation">
        <sequence resource="EMBL-CDS" id="ABD45829"/>
    </conflict>
</comment>
<organism>
    <name type="scientific">Neorickettsia sennetsu (strain ATCC VR-367 / Miyayama)</name>
    <name type="common">Ehrlichia sennetsu</name>
    <dbReference type="NCBI Taxonomy" id="222891"/>
    <lineage>
        <taxon>Bacteria</taxon>
        <taxon>Pseudomonadati</taxon>
        <taxon>Pseudomonadota</taxon>
        <taxon>Alphaproteobacteria</taxon>
        <taxon>Rickettsiales</taxon>
        <taxon>Anaplasmataceae</taxon>
        <taxon>Neorickettsia</taxon>
    </lineage>
</organism>
<accession>Q2GDF4</accession>
<reference key="1">
    <citation type="journal article" date="2006" name="PLoS Genet.">
        <title>Comparative genomics of emerging human ehrlichiosis agents.</title>
        <authorList>
            <person name="Dunning Hotopp J.C."/>
            <person name="Lin M."/>
            <person name="Madupu R."/>
            <person name="Crabtree J."/>
            <person name="Angiuoli S.V."/>
            <person name="Eisen J.A."/>
            <person name="Seshadri R."/>
            <person name="Ren Q."/>
            <person name="Wu M."/>
            <person name="Utterback T.R."/>
            <person name="Smith S."/>
            <person name="Lewis M."/>
            <person name="Khouri H."/>
            <person name="Zhang C."/>
            <person name="Niu H."/>
            <person name="Lin Q."/>
            <person name="Ohashi N."/>
            <person name="Zhi N."/>
            <person name="Nelson W.C."/>
            <person name="Brinkac L.M."/>
            <person name="Dodson R.J."/>
            <person name="Rosovitz M.J."/>
            <person name="Sundaram J.P."/>
            <person name="Daugherty S.C."/>
            <person name="Davidsen T."/>
            <person name="Durkin A.S."/>
            <person name="Gwinn M.L."/>
            <person name="Haft D.H."/>
            <person name="Selengut J.D."/>
            <person name="Sullivan S.A."/>
            <person name="Zafar N."/>
            <person name="Zhou L."/>
            <person name="Benahmed F."/>
            <person name="Forberger H."/>
            <person name="Halpin R."/>
            <person name="Mulligan S."/>
            <person name="Robinson J."/>
            <person name="White O."/>
            <person name="Rikihisa Y."/>
            <person name="Tettelin H."/>
        </authorList>
    </citation>
    <scope>NUCLEOTIDE SEQUENCE [LARGE SCALE GENOMIC DNA]</scope>
    <source>
        <strain>ATCC VR-367 / Miyayama</strain>
    </source>
</reference>
<gene>
    <name evidence="1" type="primary">bioB</name>
    <name type="ordered locus">NSE_0612</name>
</gene>